<keyword id="KW-0031">Aminopeptidase</keyword>
<keyword id="KW-0963">Cytoplasm</keyword>
<keyword id="KW-0378">Hydrolase</keyword>
<keyword id="KW-0479">Metal-binding</keyword>
<keyword id="KW-0482">Metalloprotease</keyword>
<keyword id="KW-0645">Protease</keyword>
<keyword id="KW-0862">Zinc</keyword>
<reference key="1">
    <citation type="journal article" date="2009" name="PLoS Pathog.">
        <title>Genomic evidence for the evolution of Streptococcus equi: host restriction, increased virulence, and genetic exchange with human pathogens.</title>
        <authorList>
            <person name="Holden M.T.G."/>
            <person name="Heather Z."/>
            <person name="Paillot R."/>
            <person name="Steward K.F."/>
            <person name="Webb K."/>
            <person name="Ainslie F."/>
            <person name="Jourdan T."/>
            <person name="Bason N.C."/>
            <person name="Holroyd N.E."/>
            <person name="Mungall K."/>
            <person name="Quail M.A."/>
            <person name="Sanders M."/>
            <person name="Simmonds M."/>
            <person name="Willey D."/>
            <person name="Brooks K."/>
            <person name="Aanensen D.M."/>
            <person name="Spratt B.G."/>
            <person name="Jolley K.A."/>
            <person name="Maiden M.C.J."/>
            <person name="Kehoe M."/>
            <person name="Chanter N."/>
            <person name="Bentley S.D."/>
            <person name="Robinson C."/>
            <person name="Maskell D.J."/>
            <person name="Parkhill J."/>
            <person name="Waller A.S."/>
        </authorList>
    </citation>
    <scope>NUCLEOTIDE SEQUENCE [LARGE SCALE GENOMIC DNA]</scope>
    <source>
        <strain>H70</strain>
    </source>
</reference>
<feature type="chain" id="PRO_1000211996" description="Peptidase T">
    <location>
        <begin position="1"/>
        <end position="407"/>
    </location>
</feature>
<feature type="active site" evidence="1">
    <location>
        <position position="84"/>
    </location>
</feature>
<feature type="active site" description="Proton acceptor" evidence="1">
    <location>
        <position position="177"/>
    </location>
</feature>
<feature type="binding site" evidence="1">
    <location>
        <position position="82"/>
    </location>
    <ligand>
        <name>Zn(2+)</name>
        <dbReference type="ChEBI" id="CHEBI:29105"/>
        <label>1</label>
    </ligand>
</feature>
<feature type="binding site" evidence="1">
    <location>
        <position position="143"/>
    </location>
    <ligand>
        <name>Zn(2+)</name>
        <dbReference type="ChEBI" id="CHEBI:29105"/>
        <label>1</label>
    </ligand>
</feature>
<feature type="binding site" evidence="1">
    <location>
        <position position="143"/>
    </location>
    <ligand>
        <name>Zn(2+)</name>
        <dbReference type="ChEBI" id="CHEBI:29105"/>
        <label>2</label>
    </ligand>
</feature>
<feature type="binding site" evidence="1">
    <location>
        <position position="178"/>
    </location>
    <ligand>
        <name>Zn(2+)</name>
        <dbReference type="ChEBI" id="CHEBI:29105"/>
        <label>2</label>
    </ligand>
</feature>
<feature type="binding site" evidence="1">
    <location>
        <position position="200"/>
    </location>
    <ligand>
        <name>Zn(2+)</name>
        <dbReference type="ChEBI" id="CHEBI:29105"/>
        <label>1</label>
    </ligand>
</feature>
<feature type="binding site" evidence="1">
    <location>
        <position position="382"/>
    </location>
    <ligand>
        <name>Zn(2+)</name>
        <dbReference type="ChEBI" id="CHEBI:29105"/>
        <label>2</label>
    </ligand>
</feature>
<name>PEPT_STRS7</name>
<accession>C0MGM6</accession>
<organism>
    <name type="scientific">Streptococcus equi subsp. zooepidemicus (strain H70)</name>
    <dbReference type="NCBI Taxonomy" id="553483"/>
    <lineage>
        <taxon>Bacteria</taxon>
        <taxon>Bacillati</taxon>
        <taxon>Bacillota</taxon>
        <taxon>Bacilli</taxon>
        <taxon>Lactobacillales</taxon>
        <taxon>Streptococcaceae</taxon>
        <taxon>Streptococcus</taxon>
    </lineage>
</organism>
<evidence type="ECO:0000255" key="1">
    <source>
        <dbReference type="HAMAP-Rule" id="MF_00550"/>
    </source>
</evidence>
<gene>
    <name evidence="1" type="primary">pepT</name>
    <name type="ordered locus">SZO_11100</name>
</gene>
<proteinExistence type="inferred from homology"/>
<dbReference type="EC" id="3.4.11.4" evidence="1"/>
<dbReference type="EMBL" id="FM204884">
    <property type="protein sequence ID" value="CAW99513.1"/>
    <property type="molecule type" value="Genomic_DNA"/>
</dbReference>
<dbReference type="SMR" id="C0MGM6"/>
<dbReference type="MEROPS" id="M20.003"/>
<dbReference type="KEGG" id="seq:SZO_11100"/>
<dbReference type="eggNOG" id="COG2195">
    <property type="taxonomic scope" value="Bacteria"/>
</dbReference>
<dbReference type="HOGENOM" id="CLU_053676_0_0_9"/>
<dbReference type="Proteomes" id="UP000001368">
    <property type="component" value="Chromosome"/>
</dbReference>
<dbReference type="GO" id="GO:0005829">
    <property type="term" value="C:cytosol"/>
    <property type="evidence" value="ECO:0007669"/>
    <property type="project" value="TreeGrafter"/>
</dbReference>
<dbReference type="GO" id="GO:0008237">
    <property type="term" value="F:metallopeptidase activity"/>
    <property type="evidence" value="ECO:0007669"/>
    <property type="project" value="UniProtKB-KW"/>
</dbReference>
<dbReference type="GO" id="GO:0045148">
    <property type="term" value="F:tripeptide aminopeptidase activity"/>
    <property type="evidence" value="ECO:0007669"/>
    <property type="project" value="UniProtKB-UniRule"/>
</dbReference>
<dbReference type="GO" id="GO:0008270">
    <property type="term" value="F:zinc ion binding"/>
    <property type="evidence" value="ECO:0007669"/>
    <property type="project" value="UniProtKB-UniRule"/>
</dbReference>
<dbReference type="GO" id="GO:0043171">
    <property type="term" value="P:peptide catabolic process"/>
    <property type="evidence" value="ECO:0007669"/>
    <property type="project" value="UniProtKB-UniRule"/>
</dbReference>
<dbReference type="GO" id="GO:0006508">
    <property type="term" value="P:proteolysis"/>
    <property type="evidence" value="ECO:0007669"/>
    <property type="project" value="UniProtKB-UniRule"/>
</dbReference>
<dbReference type="CDD" id="cd03892">
    <property type="entry name" value="M20_peptT"/>
    <property type="match status" value="1"/>
</dbReference>
<dbReference type="FunFam" id="3.30.70.360:FF:000002">
    <property type="entry name" value="Peptidase T"/>
    <property type="match status" value="1"/>
</dbReference>
<dbReference type="Gene3D" id="3.30.70.360">
    <property type="match status" value="1"/>
</dbReference>
<dbReference type="Gene3D" id="3.40.630.10">
    <property type="entry name" value="Zn peptidases"/>
    <property type="match status" value="1"/>
</dbReference>
<dbReference type="HAMAP" id="MF_00550">
    <property type="entry name" value="Aminopeptidase_M20"/>
    <property type="match status" value="1"/>
</dbReference>
<dbReference type="InterPro" id="IPR001261">
    <property type="entry name" value="ArgE/DapE_CS"/>
</dbReference>
<dbReference type="InterPro" id="IPR036264">
    <property type="entry name" value="Bact_exopeptidase_dim_dom"/>
</dbReference>
<dbReference type="InterPro" id="IPR002933">
    <property type="entry name" value="Peptidase_M20"/>
</dbReference>
<dbReference type="InterPro" id="IPR011650">
    <property type="entry name" value="Peptidase_M20_dimer"/>
</dbReference>
<dbReference type="InterPro" id="IPR010161">
    <property type="entry name" value="Peptidase_M20B"/>
</dbReference>
<dbReference type="NCBIfam" id="TIGR01882">
    <property type="entry name" value="peptidase-T"/>
    <property type="match status" value="1"/>
</dbReference>
<dbReference type="NCBIfam" id="NF003976">
    <property type="entry name" value="PRK05469.1"/>
    <property type="match status" value="1"/>
</dbReference>
<dbReference type="NCBIfam" id="NF009920">
    <property type="entry name" value="PRK13381.1"/>
    <property type="match status" value="1"/>
</dbReference>
<dbReference type="PANTHER" id="PTHR42994">
    <property type="entry name" value="PEPTIDASE T"/>
    <property type="match status" value="1"/>
</dbReference>
<dbReference type="PANTHER" id="PTHR42994:SF1">
    <property type="entry name" value="PEPTIDASE T"/>
    <property type="match status" value="1"/>
</dbReference>
<dbReference type="Pfam" id="PF07687">
    <property type="entry name" value="M20_dimer"/>
    <property type="match status" value="1"/>
</dbReference>
<dbReference type="Pfam" id="PF01546">
    <property type="entry name" value="Peptidase_M20"/>
    <property type="match status" value="1"/>
</dbReference>
<dbReference type="PIRSF" id="PIRSF037215">
    <property type="entry name" value="Peptidase_M20B"/>
    <property type="match status" value="1"/>
</dbReference>
<dbReference type="SUPFAM" id="SSF55031">
    <property type="entry name" value="Bacterial exopeptidase dimerisation domain"/>
    <property type="match status" value="1"/>
</dbReference>
<dbReference type="SUPFAM" id="SSF53187">
    <property type="entry name" value="Zn-dependent exopeptidases"/>
    <property type="match status" value="1"/>
</dbReference>
<dbReference type="PROSITE" id="PS00758">
    <property type="entry name" value="ARGE_DAPE_CPG2_1"/>
    <property type="match status" value="1"/>
</dbReference>
<dbReference type="PROSITE" id="PS00759">
    <property type="entry name" value="ARGE_DAPE_CPG2_2"/>
    <property type="match status" value="1"/>
</dbReference>
<protein>
    <recommendedName>
        <fullName evidence="1">Peptidase T</fullName>
        <ecNumber evidence="1">3.4.11.4</ecNumber>
    </recommendedName>
    <alternativeName>
        <fullName evidence="1">Aminotripeptidase</fullName>
        <shortName evidence="1">Tripeptidase</shortName>
    </alternativeName>
    <alternativeName>
        <fullName evidence="1">Tripeptide aminopeptidase</fullName>
    </alternativeName>
</protein>
<comment type="function">
    <text evidence="1">Cleaves the N-terminal amino acid of tripeptides.</text>
</comment>
<comment type="catalytic activity">
    <reaction evidence="1">
        <text>Release of the N-terminal residue from a tripeptide.</text>
        <dbReference type="EC" id="3.4.11.4"/>
    </reaction>
</comment>
<comment type="cofactor">
    <cofactor evidence="1">
        <name>Zn(2+)</name>
        <dbReference type="ChEBI" id="CHEBI:29105"/>
    </cofactor>
    <text evidence="1">Binds 2 Zn(2+) ions per subunit.</text>
</comment>
<comment type="subcellular location">
    <subcellularLocation>
        <location evidence="1">Cytoplasm</location>
    </subcellularLocation>
</comment>
<comment type="similarity">
    <text evidence="1">Belongs to the peptidase M20B family.</text>
</comment>
<sequence>MTYETLLERFLNYVKINTRSNPASTTTPSTKSQADFALTVLKPEMEAIGLQDIHYNPANGYLIGSLPANSSKLTRKIGFIAHMDTADFNAEGVAPQIIESYQGGEIKLGQSGYSLCPEDFPNLNQYLGQTLITTDGTTLLGADDKSGIAEIMTAIEFLVANPQIEHCDIKVAFGPDEEIGVGADKFDVNAFDVDFAYTIDGGPLGELQYETFSAAALELKVLGRNVHPGTAKNQMINALQLAMDFHSQLPVDDRPEKTDGYQGFYHLHSMSGTVEEAQASYIIRDFEDSSFEARKAFVTQLAEEMNSQLGAERVFVTVTDQYYNMKKVIEKDMTPVNLAKAVMEDLAIKPVIEPIRGGTDGSKISFMGIPTPNIFAGGENMHGRFEFVSLQTMEKAVDVILGIVQKA</sequence>